<evidence type="ECO:0000255" key="1">
    <source>
        <dbReference type="HAMAP-Rule" id="MF_00121"/>
    </source>
</evidence>
<reference key="1">
    <citation type="journal article" date="2007" name="Proc. Natl. Acad. Sci. U.S.A.">
        <title>Deep-sea vent epsilon-proteobacterial genomes provide insights into emergence of pathogens.</title>
        <authorList>
            <person name="Nakagawa S."/>
            <person name="Takaki Y."/>
            <person name="Shimamura S."/>
            <person name="Reysenbach A.-L."/>
            <person name="Takai K."/>
            <person name="Horikoshi K."/>
        </authorList>
    </citation>
    <scope>NUCLEOTIDE SEQUENCE [LARGE SCALE GENOMIC DNA]</scope>
    <source>
        <strain>NBC37-1</strain>
    </source>
</reference>
<gene>
    <name evidence="1" type="primary">gatB</name>
    <name type="ordered locus">SUN_1580</name>
</gene>
<accession>A6QAM1</accession>
<organism>
    <name type="scientific">Sulfurovum sp. (strain NBC37-1)</name>
    <dbReference type="NCBI Taxonomy" id="387093"/>
    <lineage>
        <taxon>Bacteria</taxon>
        <taxon>Pseudomonadati</taxon>
        <taxon>Campylobacterota</taxon>
        <taxon>Epsilonproteobacteria</taxon>
        <taxon>Campylobacterales</taxon>
        <taxon>Sulfurovaceae</taxon>
        <taxon>Sulfurovum</taxon>
    </lineage>
</organism>
<comment type="function">
    <text evidence="1">Allows the formation of correctly charged Asn-tRNA(Asn) or Gln-tRNA(Gln) through the transamidation of misacylated Asp-tRNA(Asn) or Glu-tRNA(Gln) in organisms which lack either or both of asparaginyl-tRNA or glutaminyl-tRNA synthetases. The reaction takes place in the presence of glutamine and ATP through an activated phospho-Asp-tRNA(Asn) or phospho-Glu-tRNA(Gln).</text>
</comment>
<comment type="catalytic activity">
    <reaction evidence="1">
        <text>L-glutamyl-tRNA(Gln) + L-glutamine + ATP + H2O = L-glutaminyl-tRNA(Gln) + L-glutamate + ADP + phosphate + H(+)</text>
        <dbReference type="Rhea" id="RHEA:17521"/>
        <dbReference type="Rhea" id="RHEA-COMP:9681"/>
        <dbReference type="Rhea" id="RHEA-COMP:9684"/>
        <dbReference type="ChEBI" id="CHEBI:15377"/>
        <dbReference type="ChEBI" id="CHEBI:15378"/>
        <dbReference type="ChEBI" id="CHEBI:29985"/>
        <dbReference type="ChEBI" id="CHEBI:30616"/>
        <dbReference type="ChEBI" id="CHEBI:43474"/>
        <dbReference type="ChEBI" id="CHEBI:58359"/>
        <dbReference type="ChEBI" id="CHEBI:78520"/>
        <dbReference type="ChEBI" id="CHEBI:78521"/>
        <dbReference type="ChEBI" id="CHEBI:456216"/>
    </reaction>
</comment>
<comment type="catalytic activity">
    <reaction evidence="1">
        <text>L-aspartyl-tRNA(Asn) + L-glutamine + ATP + H2O = L-asparaginyl-tRNA(Asn) + L-glutamate + ADP + phosphate + 2 H(+)</text>
        <dbReference type="Rhea" id="RHEA:14513"/>
        <dbReference type="Rhea" id="RHEA-COMP:9674"/>
        <dbReference type="Rhea" id="RHEA-COMP:9677"/>
        <dbReference type="ChEBI" id="CHEBI:15377"/>
        <dbReference type="ChEBI" id="CHEBI:15378"/>
        <dbReference type="ChEBI" id="CHEBI:29985"/>
        <dbReference type="ChEBI" id="CHEBI:30616"/>
        <dbReference type="ChEBI" id="CHEBI:43474"/>
        <dbReference type="ChEBI" id="CHEBI:58359"/>
        <dbReference type="ChEBI" id="CHEBI:78515"/>
        <dbReference type="ChEBI" id="CHEBI:78516"/>
        <dbReference type="ChEBI" id="CHEBI:456216"/>
    </reaction>
</comment>
<comment type="subunit">
    <text evidence="1">Heterotrimer of A, B and C subunits.</text>
</comment>
<comment type="similarity">
    <text evidence="1">Belongs to the GatB/GatE family. GatB subfamily.</text>
</comment>
<feature type="chain" id="PRO_1000016053" description="Aspartyl/glutamyl-tRNA(Asn/Gln) amidotransferase subunit B">
    <location>
        <begin position="1"/>
        <end position="477"/>
    </location>
</feature>
<sequence length="477" mass="53239">MFETVIGLEVHVQLNTKTKLFCSCPTSFAEHQNKNTCPTCLALPGALPVVNKEAAIKAMRFGYAVNANVNHTSIFDRKSYFYPDSPSAYQITQLSKAIVQKGELFIDLEDGSQKRIGITQAHLEADAGKNMHEGNYSKVDLNRAGTPLMEIVSEPDMRSSDEAVAYLKKLHSTVRYLDISDANMQEGSFRCDVNVSIRPKGQEAFGTRVEIKNINSFRFVAQAIAYEVQRQVEAYEDGVYAQEVHQETRLWDVAKSETRSMRGKEEAADYRYFPDPDLRPLTVTQEMIDEALVMPELPDAKVKRYVEELGIKHYDALVITSQKELAYYFEEMITQGAVAKTAVTWLTSELLGRLNKAGIEIENSPVSAKTLGELVAKIADDTVSGKGAKEVLDHMMENENRDIDVIIDELGLAQVSDDGAILAIIDEILENNQEKVEQYKGGKEKLFGFFVGQTMKVSKGTANPGKVNELLKQRLNS</sequence>
<keyword id="KW-0067">ATP-binding</keyword>
<keyword id="KW-0436">Ligase</keyword>
<keyword id="KW-0547">Nucleotide-binding</keyword>
<keyword id="KW-0648">Protein biosynthesis</keyword>
<protein>
    <recommendedName>
        <fullName evidence="1">Aspartyl/glutamyl-tRNA(Asn/Gln) amidotransferase subunit B</fullName>
        <shortName evidence="1">Asp/Glu-ADT subunit B</shortName>
        <ecNumber evidence="1">6.3.5.-</ecNumber>
    </recommendedName>
</protein>
<proteinExistence type="inferred from homology"/>
<dbReference type="EC" id="6.3.5.-" evidence="1"/>
<dbReference type="EMBL" id="AP009179">
    <property type="protein sequence ID" value="BAF72530.1"/>
    <property type="molecule type" value="Genomic_DNA"/>
</dbReference>
<dbReference type="RefSeq" id="WP_012083334.1">
    <property type="nucleotide sequence ID" value="NC_009663.1"/>
</dbReference>
<dbReference type="SMR" id="A6QAM1"/>
<dbReference type="STRING" id="387093.SUN_1580"/>
<dbReference type="KEGG" id="sun:SUN_1580"/>
<dbReference type="eggNOG" id="COG0064">
    <property type="taxonomic scope" value="Bacteria"/>
</dbReference>
<dbReference type="HOGENOM" id="CLU_019240_0_0_7"/>
<dbReference type="OrthoDB" id="9804078at2"/>
<dbReference type="Proteomes" id="UP000006378">
    <property type="component" value="Chromosome"/>
</dbReference>
<dbReference type="GO" id="GO:0050566">
    <property type="term" value="F:asparaginyl-tRNA synthase (glutamine-hydrolyzing) activity"/>
    <property type="evidence" value="ECO:0007669"/>
    <property type="project" value="RHEA"/>
</dbReference>
<dbReference type="GO" id="GO:0005524">
    <property type="term" value="F:ATP binding"/>
    <property type="evidence" value="ECO:0007669"/>
    <property type="project" value="UniProtKB-KW"/>
</dbReference>
<dbReference type="GO" id="GO:0050567">
    <property type="term" value="F:glutaminyl-tRNA synthase (glutamine-hydrolyzing) activity"/>
    <property type="evidence" value="ECO:0007669"/>
    <property type="project" value="UniProtKB-UniRule"/>
</dbReference>
<dbReference type="GO" id="GO:0070681">
    <property type="term" value="P:glutaminyl-tRNAGln biosynthesis via transamidation"/>
    <property type="evidence" value="ECO:0007669"/>
    <property type="project" value="TreeGrafter"/>
</dbReference>
<dbReference type="GO" id="GO:0006412">
    <property type="term" value="P:translation"/>
    <property type="evidence" value="ECO:0007669"/>
    <property type="project" value="UniProtKB-UniRule"/>
</dbReference>
<dbReference type="FunFam" id="1.10.10.410:FF:000001">
    <property type="entry name" value="Aspartyl/glutamyl-tRNA(Asn/Gln) amidotransferase subunit B"/>
    <property type="match status" value="1"/>
</dbReference>
<dbReference type="FunFam" id="1.10.150.380:FF:000001">
    <property type="entry name" value="Aspartyl/glutamyl-tRNA(Asn/Gln) amidotransferase subunit B"/>
    <property type="match status" value="1"/>
</dbReference>
<dbReference type="Gene3D" id="1.10.10.410">
    <property type="match status" value="1"/>
</dbReference>
<dbReference type="Gene3D" id="1.10.150.380">
    <property type="entry name" value="GatB domain, N-terminal subdomain"/>
    <property type="match status" value="1"/>
</dbReference>
<dbReference type="HAMAP" id="MF_00121">
    <property type="entry name" value="GatB"/>
    <property type="match status" value="1"/>
</dbReference>
<dbReference type="InterPro" id="IPR017959">
    <property type="entry name" value="Asn/Gln-tRNA_amidoTrfase_suB/E"/>
</dbReference>
<dbReference type="InterPro" id="IPR006075">
    <property type="entry name" value="Asn/Gln-tRNA_Trfase_suB/E_cat"/>
</dbReference>
<dbReference type="InterPro" id="IPR018027">
    <property type="entry name" value="Asn/Gln_amidotransferase"/>
</dbReference>
<dbReference type="InterPro" id="IPR003789">
    <property type="entry name" value="Asn/Gln_tRNA_amidoTrase-B-like"/>
</dbReference>
<dbReference type="InterPro" id="IPR004413">
    <property type="entry name" value="GatB"/>
</dbReference>
<dbReference type="InterPro" id="IPR042114">
    <property type="entry name" value="GatB_C_1"/>
</dbReference>
<dbReference type="InterPro" id="IPR023168">
    <property type="entry name" value="GatB_Yqey_C_2"/>
</dbReference>
<dbReference type="InterPro" id="IPR017958">
    <property type="entry name" value="Gln-tRNA_amidoTrfase_suB_CS"/>
</dbReference>
<dbReference type="InterPro" id="IPR014746">
    <property type="entry name" value="Gln_synth/guanido_kin_cat_dom"/>
</dbReference>
<dbReference type="NCBIfam" id="TIGR00133">
    <property type="entry name" value="gatB"/>
    <property type="match status" value="1"/>
</dbReference>
<dbReference type="NCBIfam" id="NF004012">
    <property type="entry name" value="PRK05477.1-2"/>
    <property type="match status" value="1"/>
</dbReference>
<dbReference type="NCBIfam" id="NF004014">
    <property type="entry name" value="PRK05477.1-4"/>
    <property type="match status" value="1"/>
</dbReference>
<dbReference type="PANTHER" id="PTHR11659">
    <property type="entry name" value="GLUTAMYL-TRNA GLN AMIDOTRANSFERASE SUBUNIT B MITOCHONDRIAL AND PROKARYOTIC PET112-RELATED"/>
    <property type="match status" value="1"/>
</dbReference>
<dbReference type="PANTHER" id="PTHR11659:SF0">
    <property type="entry name" value="GLUTAMYL-TRNA(GLN) AMIDOTRANSFERASE SUBUNIT B, MITOCHONDRIAL"/>
    <property type="match status" value="1"/>
</dbReference>
<dbReference type="Pfam" id="PF02934">
    <property type="entry name" value="GatB_N"/>
    <property type="match status" value="1"/>
</dbReference>
<dbReference type="Pfam" id="PF02637">
    <property type="entry name" value="GatB_Yqey"/>
    <property type="match status" value="1"/>
</dbReference>
<dbReference type="SMART" id="SM00845">
    <property type="entry name" value="GatB_Yqey"/>
    <property type="match status" value="1"/>
</dbReference>
<dbReference type="SUPFAM" id="SSF89095">
    <property type="entry name" value="GatB/YqeY motif"/>
    <property type="match status" value="1"/>
</dbReference>
<dbReference type="SUPFAM" id="SSF55931">
    <property type="entry name" value="Glutamine synthetase/guanido kinase"/>
    <property type="match status" value="1"/>
</dbReference>
<dbReference type="PROSITE" id="PS01234">
    <property type="entry name" value="GATB"/>
    <property type="match status" value="1"/>
</dbReference>
<name>GATB_SULNB</name>